<evidence type="ECO:0000250" key="1"/>
<evidence type="ECO:0000255" key="2"/>
<evidence type="ECO:0000305" key="3"/>
<name>HEMA_I60A1</name>
<feature type="signal peptide" evidence="2">
    <location>
        <begin position="1"/>
        <end position="16"/>
    </location>
</feature>
<feature type="chain" id="PRO_0000038945" description="Hemagglutinin HA1 chain">
    <location>
        <begin position="17"/>
        <end position="100" status="greater than"/>
    </location>
</feature>
<feature type="glycosylation site" description="N-linked (GlcNAc...) asparagine; by host" evidence="2">
    <location>
        <position position="26"/>
    </location>
</feature>
<feature type="glycosylation site" description="N-linked (GlcNAc...) asparagine; by host" evidence="2">
    <location>
        <position position="27"/>
    </location>
</feature>
<feature type="glycosylation site" description="N-linked (GlcNAc...) asparagine; by host" evidence="2">
    <location>
        <position position="39"/>
    </location>
</feature>
<feature type="non-terminal residue">
    <location>
        <position position="100"/>
    </location>
</feature>
<keyword id="KW-1167">Clathrin- and caveolin-independent endocytosis of virus by host</keyword>
<keyword id="KW-1165">Clathrin-mediated endocytosis of virus by host</keyword>
<keyword id="KW-1015">Disulfide bond</keyword>
<keyword id="KW-1170">Fusion of virus membrane with host endosomal membrane</keyword>
<keyword id="KW-1168">Fusion of virus membrane with host membrane</keyword>
<keyword id="KW-0325">Glycoprotein</keyword>
<keyword id="KW-0348">Hemagglutinin</keyword>
<keyword id="KW-1032">Host cell membrane</keyword>
<keyword id="KW-1043">Host membrane</keyword>
<keyword id="KW-0945">Host-virus interaction</keyword>
<keyword id="KW-0449">Lipoprotein</keyword>
<keyword id="KW-0472">Membrane</keyword>
<keyword id="KW-0564">Palmitate</keyword>
<keyword id="KW-0732">Signal</keyword>
<keyword id="KW-0812">Transmembrane</keyword>
<keyword id="KW-1161">Viral attachment to host cell</keyword>
<keyword id="KW-0261">Viral envelope protein</keyword>
<keyword id="KW-1162">Viral penetration into host cytoplasm</keyword>
<keyword id="KW-0946">Virion</keyword>
<keyword id="KW-1164">Virus endocytosis by host</keyword>
<keyword id="KW-1160">Virus entry into host cell</keyword>
<comment type="function">
    <text>Binds to sialic acid-containing receptors on the cell surface, bringing about the attachment of the virus particle to the cell. This attachment induces virion internalization of about two third of the virus particles through clathrin-dependent endocytosis and about one third through a clathrin- and caveolin-independent pathway. Plays a major role in the determination of host range restriction and virulence. Class I viral fusion protein. Responsible for penetration of the virus into the cell cytoplasm by mediating the fusion of the membrane of the endocytosed virus particle with the endosomal membrane. Low pH in endosomes induces an irreversible conformational change in HA2, releasing the fusion hydrophobic peptide. Several trimers are required to form a competent fusion pore.</text>
</comment>
<comment type="subunit">
    <text>Homotrimer of disulfide-linked HA1-HA2.</text>
</comment>
<comment type="subcellular location">
    <subcellularLocation>
        <location evidence="3">Virion membrane</location>
        <topology evidence="3">Single-pass type I membrane protein</topology>
    </subcellularLocation>
    <subcellularLocation>
        <location>Host apical cell membrane</location>
        <topology>Single-pass type I membrane protein</topology>
    </subcellularLocation>
    <text>Targeted to the apical plasma membrane in epithelial polarized cells through a signal present in the transmembrane domain. Associated with glycosphingolipid- and cholesterol-enriched detergent-resistant lipid rafts.</text>
</comment>
<comment type="PTM">
    <text evidence="1">In natural infection, inactive HA is matured into HA1 and HA2 outside the cell by one or more trypsin-like, arginine-specific endoprotease secreted by the bronchial epithelial cells. One identified protease that may be involved in this process is secreted in lungs by club cells (By similarity).</text>
</comment>
<comment type="PTM">
    <text evidence="1">Palmitoylated.</text>
</comment>
<comment type="miscellaneous">
    <text>Major glycoprotein, comprises over 80% of the envelope proteins present in virus particle.</text>
</comment>
<comment type="miscellaneous">
    <text>The extent of infection into host organism is determined by HA. Influenza viruses bud from the apical surface of polarized epithelial cells (e.g. bronchial epithelial cells) into lumen of lungs and are therefore usually pneumotropic. The reason is that HA is cleaved by tryptase clara which is restricted to lungs. However, HAs of H5 and H7 pantropic avian viruses subtypes can be cleaved by furin and subtilisin-type enzymes, allowing the virus to grow in other organs than lungs.</text>
</comment>
<comment type="miscellaneous">
    <text>The influenza A genome consist of 8 RNA segments. Genetic variation of hemagglutinin and/or neuraminidase genes results in the emergence of new influenza strains. The mechanism of variation can be the result of point mutations or the result of genetic reassortment between segments of two different strains.</text>
</comment>
<comment type="similarity">
    <text evidence="3">Belongs to the influenza viruses hemagglutinin family.</text>
</comment>
<proteinExistence type="inferred from homology"/>
<protein>
    <recommendedName>
        <fullName>Hemagglutinin</fullName>
    </recommendedName>
    <component>
        <recommendedName>
            <fullName>Hemagglutinin HA1 chain</fullName>
        </recommendedName>
    </component>
</protein>
<accession>P04659</accession>
<organismHost>
    <name type="scientific">Aves</name>
    <dbReference type="NCBI Taxonomy" id="8782"/>
</organismHost>
<dbReference type="EMBL" id="J02108">
    <property type="protein sequence ID" value="AAA43203.1"/>
    <property type="molecule type" value="Genomic_RNA"/>
</dbReference>
<dbReference type="SMR" id="P04659"/>
<dbReference type="GlyCosmos" id="P04659">
    <property type="glycosylation" value="3 sites, No reported glycans"/>
</dbReference>
<dbReference type="GO" id="GO:0020002">
    <property type="term" value="C:host cell plasma membrane"/>
    <property type="evidence" value="ECO:0007669"/>
    <property type="project" value="UniProtKB-SubCell"/>
</dbReference>
<dbReference type="GO" id="GO:0016020">
    <property type="term" value="C:membrane"/>
    <property type="evidence" value="ECO:0007669"/>
    <property type="project" value="UniProtKB-KW"/>
</dbReference>
<dbReference type="GO" id="GO:0019031">
    <property type="term" value="C:viral envelope"/>
    <property type="evidence" value="ECO:0007669"/>
    <property type="project" value="UniProtKB-KW"/>
</dbReference>
<dbReference type="GO" id="GO:0055036">
    <property type="term" value="C:virion membrane"/>
    <property type="evidence" value="ECO:0007669"/>
    <property type="project" value="UniProtKB-SubCell"/>
</dbReference>
<dbReference type="GO" id="GO:0046789">
    <property type="term" value="F:host cell surface receptor binding"/>
    <property type="evidence" value="ECO:0007669"/>
    <property type="project" value="InterPro"/>
</dbReference>
<dbReference type="GO" id="GO:0075512">
    <property type="term" value="P:clathrin-dependent endocytosis of virus by host cell"/>
    <property type="evidence" value="ECO:0007669"/>
    <property type="project" value="UniProtKB-KW"/>
</dbReference>
<dbReference type="GO" id="GO:0039654">
    <property type="term" value="P:fusion of virus membrane with host endosome membrane"/>
    <property type="evidence" value="ECO:0007669"/>
    <property type="project" value="UniProtKB-KW"/>
</dbReference>
<dbReference type="GO" id="GO:0019064">
    <property type="term" value="P:fusion of virus membrane with host plasma membrane"/>
    <property type="evidence" value="ECO:0007669"/>
    <property type="project" value="InterPro"/>
</dbReference>
<dbReference type="GO" id="GO:0019062">
    <property type="term" value="P:virion attachment to host cell"/>
    <property type="evidence" value="ECO:0007669"/>
    <property type="project" value="UniProtKB-KW"/>
</dbReference>
<dbReference type="Gene3D" id="3.90.209.20">
    <property type="match status" value="1"/>
</dbReference>
<dbReference type="Gene3D" id="2.10.77.10">
    <property type="entry name" value="Hemagglutinin Chain A, Domain 2"/>
    <property type="match status" value="1"/>
</dbReference>
<dbReference type="InterPro" id="IPR008980">
    <property type="entry name" value="Capsid_hemagglutn"/>
</dbReference>
<dbReference type="InterPro" id="IPR013828">
    <property type="entry name" value="Hemagglutn_HA1_a/b_dom_sf"/>
</dbReference>
<dbReference type="InterPro" id="IPR000149">
    <property type="entry name" value="Hemagglutn_influenz_A"/>
</dbReference>
<dbReference type="InterPro" id="IPR001364">
    <property type="entry name" value="Hemagglutn_influenz_A/B"/>
</dbReference>
<dbReference type="Pfam" id="PF00509">
    <property type="entry name" value="Hemagglutinin"/>
    <property type="match status" value="1"/>
</dbReference>
<dbReference type="PRINTS" id="PR00330">
    <property type="entry name" value="HEMAGGLUTN1"/>
</dbReference>
<dbReference type="SUPFAM" id="SSF49818">
    <property type="entry name" value="Viral protein domain"/>
    <property type="match status" value="1"/>
</dbReference>
<organism>
    <name type="scientific">Influenza A virus (strain A/Duck/Ukraine/1/1960 H11N9)</name>
    <dbReference type="NCBI Taxonomy" id="387212"/>
    <lineage>
        <taxon>Viruses</taxon>
        <taxon>Riboviria</taxon>
        <taxon>Orthornavirae</taxon>
        <taxon>Negarnaviricota</taxon>
        <taxon>Polyploviricotina</taxon>
        <taxon>Insthoviricetes</taxon>
        <taxon>Articulavirales</taxon>
        <taxon>Orthomyxoviridae</taxon>
        <taxon>Alphainfluenzavirus</taxon>
        <taxon>Alphainfluenzavirus influenzae</taxon>
        <taxon>Influenza A virus</taxon>
    </lineage>
</organism>
<sequence>MEKTLLFAAIFLCVKADEICIGYLSNNSTDKVDTIIENNVTVTSSVELVETEHTGSFCSINGKQPISLGDCSFAGWILGNPMCDDLIGKNSWSYIVENQS</sequence>
<reference key="1">
    <citation type="journal article" date="1981" name="Proc. Natl. Acad. Sci. U.S.A.">
        <title>Sequence relationships among the hemagglutinin genes of 12 subtypes of influenza A virus.</title>
        <authorList>
            <person name="Air G.M."/>
        </authorList>
    </citation>
    <scope>NUCLEOTIDE SEQUENCE [GENOMIC RNA]</scope>
</reference>
<gene>
    <name type="primary">HA</name>
</gene>